<name>CYB_MUNMU</name>
<reference key="1">
    <citation type="journal article" date="1998" name="Anim. Conserv.">
        <title>Description of Muntiacus truongsonensis, a new species of muntjac (Artiodactyla: Muntiacidae) from central Vietnam, and implications for conservation.</title>
        <authorList>
            <person name="Giao P.M."/>
            <person name="Tuoc D."/>
            <person name="Dung V.V."/>
            <person name="Wikramanayake E.D."/>
            <person name="Amato G."/>
            <person name="Arctander P."/>
            <person name="MacKinnon J.R."/>
        </authorList>
    </citation>
    <scope>NUCLEOTIDE SEQUENCE [GENOMIC DNA]</scope>
</reference>
<feature type="chain" id="PRO_0000061214" description="Cytochrome b">
    <location>
        <begin position="1"/>
        <end position="379"/>
    </location>
</feature>
<feature type="transmembrane region" description="Helical" evidence="2">
    <location>
        <begin position="33"/>
        <end position="53"/>
    </location>
</feature>
<feature type="transmembrane region" description="Helical" evidence="2">
    <location>
        <begin position="77"/>
        <end position="98"/>
    </location>
</feature>
<feature type="transmembrane region" description="Helical" evidence="2">
    <location>
        <begin position="113"/>
        <end position="133"/>
    </location>
</feature>
<feature type="transmembrane region" description="Helical" evidence="2">
    <location>
        <begin position="178"/>
        <end position="198"/>
    </location>
</feature>
<feature type="transmembrane region" description="Helical" evidence="2">
    <location>
        <begin position="226"/>
        <end position="246"/>
    </location>
</feature>
<feature type="transmembrane region" description="Helical" evidence="2">
    <location>
        <begin position="288"/>
        <end position="308"/>
    </location>
</feature>
<feature type="transmembrane region" description="Helical" evidence="2">
    <location>
        <begin position="320"/>
        <end position="340"/>
    </location>
</feature>
<feature type="transmembrane region" description="Helical" evidence="2">
    <location>
        <begin position="347"/>
        <end position="367"/>
    </location>
</feature>
<feature type="binding site" description="axial binding residue" evidence="2">
    <location>
        <position position="83"/>
    </location>
    <ligand>
        <name>heme b</name>
        <dbReference type="ChEBI" id="CHEBI:60344"/>
        <label>b562</label>
    </ligand>
    <ligandPart>
        <name>Fe</name>
        <dbReference type="ChEBI" id="CHEBI:18248"/>
    </ligandPart>
</feature>
<feature type="binding site" description="axial binding residue" evidence="2">
    <location>
        <position position="97"/>
    </location>
    <ligand>
        <name>heme b</name>
        <dbReference type="ChEBI" id="CHEBI:60344"/>
        <label>b566</label>
    </ligand>
    <ligandPart>
        <name>Fe</name>
        <dbReference type="ChEBI" id="CHEBI:18248"/>
    </ligandPart>
</feature>
<feature type="binding site" description="axial binding residue" evidence="2">
    <location>
        <position position="182"/>
    </location>
    <ligand>
        <name>heme b</name>
        <dbReference type="ChEBI" id="CHEBI:60344"/>
        <label>b562</label>
    </ligand>
    <ligandPart>
        <name>Fe</name>
        <dbReference type="ChEBI" id="CHEBI:18248"/>
    </ligandPart>
</feature>
<feature type="binding site" description="axial binding residue" evidence="2">
    <location>
        <position position="196"/>
    </location>
    <ligand>
        <name>heme b</name>
        <dbReference type="ChEBI" id="CHEBI:60344"/>
        <label>b566</label>
    </ligand>
    <ligandPart>
        <name>Fe</name>
        <dbReference type="ChEBI" id="CHEBI:18248"/>
    </ligandPart>
</feature>
<feature type="binding site" evidence="2">
    <location>
        <position position="201"/>
    </location>
    <ligand>
        <name>a ubiquinone</name>
        <dbReference type="ChEBI" id="CHEBI:16389"/>
    </ligand>
</feature>
<feature type="sequence variant">
    <original>V</original>
    <variation>A</variation>
    <location>
        <position position="215"/>
    </location>
</feature>
<feature type="sequence variant">
    <original>L</original>
    <variation>S</variation>
    <location>
        <position position="241"/>
    </location>
</feature>
<feature type="sequence variant">
    <original>F</original>
    <variation>L</variation>
    <location>
        <position position="303"/>
    </location>
</feature>
<feature type="sequence variant">
    <original>T</original>
    <variation>I</variation>
    <location>
        <position position="369"/>
    </location>
</feature>
<proteinExistence type="inferred from homology"/>
<keyword id="KW-0249">Electron transport</keyword>
<keyword id="KW-0349">Heme</keyword>
<keyword id="KW-0408">Iron</keyword>
<keyword id="KW-0472">Membrane</keyword>
<keyword id="KW-0479">Metal-binding</keyword>
<keyword id="KW-0496">Mitochondrion</keyword>
<keyword id="KW-0999">Mitochondrion inner membrane</keyword>
<keyword id="KW-0679">Respiratory chain</keyword>
<keyword id="KW-0812">Transmembrane</keyword>
<keyword id="KW-1133">Transmembrane helix</keyword>
<keyword id="KW-0813">Transport</keyword>
<keyword id="KW-0830">Ubiquinone</keyword>
<sequence length="379" mass="42825">MTNIRKTHPLMKIVNNAFIDLPAPSNISSWWNFGSLLGICLILQILTGLFLAMHYTSDTMTAFSSVTHICRDVNYGWIIRYMHANGASMFFICLFIHVGRGLYYGSYTFLETWNIGVILLFTVMATAFVGYVLPWGQMSFWGATVITNLLSAIPYIGTNLVEWIWGGFSVDKATLTRFFAFHFILPFIIAALAMVHLLFLHETGSNNPTGIPSDVDKIPFHPYYTIKDILGALLLILFLMLLVLFVPDLLGDPDNYTPANPLNTPPHIKPEWYFLFAYAILRSIPNKLGGVLALISSILILIFMPLLHTSKQRSMIFRPLSQCLFWILVADLLTLTWIGGQPVEHPFIIIGQLASILYFLIILVLMPITSTIENNLLKW</sequence>
<geneLocation type="mitochondrion"/>
<comment type="function">
    <text evidence="2">Component of the ubiquinol-cytochrome c reductase complex (complex III or cytochrome b-c1 complex) that is part of the mitochondrial respiratory chain. The b-c1 complex mediates electron transfer from ubiquinol to cytochrome c. Contributes to the generation of a proton gradient across the mitochondrial membrane that is then used for ATP synthesis.</text>
</comment>
<comment type="cofactor">
    <cofactor evidence="2">
        <name>heme b</name>
        <dbReference type="ChEBI" id="CHEBI:60344"/>
    </cofactor>
    <text evidence="2">Binds 2 heme b groups non-covalently.</text>
</comment>
<comment type="subunit">
    <text evidence="2">The cytochrome bc1 complex contains 11 subunits: 3 respiratory subunits (MT-CYB, CYC1 and UQCRFS1), 2 core proteins (UQCRC1 and UQCRC2) and 6 low-molecular weight proteins (UQCRH/QCR6, UQCRB/QCR7, UQCRQ/QCR8, UQCR10/QCR9, UQCR11/QCR10 and a cleavage product of UQCRFS1). This cytochrome bc1 complex then forms a dimer.</text>
</comment>
<comment type="subcellular location">
    <subcellularLocation>
        <location evidence="2">Mitochondrion inner membrane</location>
        <topology evidence="2">Multi-pass membrane protein</topology>
    </subcellularLocation>
</comment>
<comment type="miscellaneous">
    <text evidence="1">Heme 1 (or BL or b562) is low-potential and absorbs at about 562 nm, and heme 2 (or BH or b566) is high-potential and absorbs at about 566 nm.</text>
</comment>
<comment type="similarity">
    <text evidence="3 4">Belongs to the cytochrome b family.</text>
</comment>
<comment type="caution">
    <text evidence="2">The full-length protein contains only eight transmembrane helices, not nine as predicted by bioinformatics tools.</text>
</comment>
<evidence type="ECO:0000250" key="1"/>
<evidence type="ECO:0000250" key="2">
    <source>
        <dbReference type="UniProtKB" id="P00157"/>
    </source>
</evidence>
<evidence type="ECO:0000255" key="3">
    <source>
        <dbReference type="PROSITE-ProRule" id="PRU00967"/>
    </source>
</evidence>
<evidence type="ECO:0000255" key="4">
    <source>
        <dbReference type="PROSITE-ProRule" id="PRU00968"/>
    </source>
</evidence>
<accession>Q9TDQ7</accession>
<accession>Q9TDQ8</accession>
<organism>
    <name type="scientific">Muntiacus muntjak</name>
    <name type="common">Barking deer</name>
    <name type="synonym">Indian muntjac</name>
    <dbReference type="NCBI Taxonomy" id="9888"/>
    <lineage>
        <taxon>Eukaryota</taxon>
        <taxon>Metazoa</taxon>
        <taxon>Chordata</taxon>
        <taxon>Craniata</taxon>
        <taxon>Vertebrata</taxon>
        <taxon>Euteleostomi</taxon>
        <taxon>Mammalia</taxon>
        <taxon>Eutheria</taxon>
        <taxon>Laurasiatheria</taxon>
        <taxon>Artiodactyla</taxon>
        <taxon>Ruminantia</taxon>
        <taxon>Pecora</taxon>
        <taxon>Cervidae</taxon>
        <taxon>Muntiacinae</taxon>
        <taxon>Muntiacus</taxon>
    </lineage>
</organism>
<dbReference type="EMBL" id="AF042717">
    <property type="protein sequence ID" value="AAD55666.1"/>
    <property type="molecule type" value="Genomic_DNA"/>
</dbReference>
<dbReference type="EMBL" id="AF042718">
    <property type="protein sequence ID" value="AAD55667.1"/>
    <property type="molecule type" value="Genomic_DNA"/>
</dbReference>
<dbReference type="SMR" id="Q9TDQ7"/>
<dbReference type="GO" id="GO:0005743">
    <property type="term" value="C:mitochondrial inner membrane"/>
    <property type="evidence" value="ECO:0007669"/>
    <property type="project" value="UniProtKB-SubCell"/>
</dbReference>
<dbReference type="GO" id="GO:0045275">
    <property type="term" value="C:respiratory chain complex III"/>
    <property type="evidence" value="ECO:0007669"/>
    <property type="project" value="InterPro"/>
</dbReference>
<dbReference type="GO" id="GO:0046872">
    <property type="term" value="F:metal ion binding"/>
    <property type="evidence" value="ECO:0007669"/>
    <property type="project" value="UniProtKB-KW"/>
</dbReference>
<dbReference type="GO" id="GO:0008121">
    <property type="term" value="F:ubiquinol-cytochrome-c reductase activity"/>
    <property type="evidence" value="ECO:0007669"/>
    <property type="project" value="InterPro"/>
</dbReference>
<dbReference type="GO" id="GO:0006122">
    <property type="term" value="P:mitochondrial electron transport, ubiquinol to cytochrome c"/>
    <property type="evidence" value="ECO:0007669"/>
    <property type="project" value="TreeGrafter"/>
</dbReference>
<dbReference type="CDD" id="cd00290">
    <property type="entry name" value="cytochrome_b_C"/>
    <property type="match status" value="1"/>
</dbReference>
<dbReference type="CDD" id="cd00284">
    <property type="entry name" value="Cytochrome_b_N"/>
    <property type="match status" value="1"/>
</dbReference>
<dbReference type="FunFam" id="1.20.810.10:FF:000002">
    <property type="entry name" value="Cytochrome b"/>
    <property type="match status" value="1"/>
</dbReference>
<dbReference type="Gene3D" id="1.20.810.10">
    <property type="entry name" value="Cytochrome Bc1 Complex, Chain C"/>
    <property type="match status" value="1"/>
</dbReference>
<dbReference type="InterPro" id="IPR005798">
    <property type="entry name" value="Cyt_b/b6_C"/>
</dbReference>
<dbReference type="InterPro" id="IPR036150">
    <property type="entry name" value="Cyt_b/b6_C_sf"/>
</dbReference>
<dbReference type="InterPro" id="IPR005797">
    <property type="entry name" value="Cyt_b/b6_N"/>
</dbReference>
<dbReference type="InterPro" id="IPR027387">
    <property type="entry name" value="Cytb/b6-like_sf"/>
</dbReference>
<dbReference type="InterPro" id="IPR030689">
    <property type="entry name" value="Cytochrome_b"/>
</dbReference>
<dbReference type="InterPro" id="IPR048260">
    <property type="entry name" value="Cytochrome_b_C_euk/bac"/>
</dbReference>
<dbReference type="InterPro" id="IPR048259">
    <property type="entry name" value="Cytochrome_b_N_euk/bac"/>
</dbReference>
<dbReference type="InterPro" id="IPR016174">
    <property type="entry name" value="Di-haem_cyt_TM"/>
</dbReference>
<dbReference type="PANTHER" id="PTHR19271">
    <property type="entry name" value="CYTOCHROME B"/>
    <property type="match status" value="1"/>
</dbReference>
<dbReference type="PANTHER" id="PTHR19271:SF16">
    <property type="entry name" value="CYTOCHROME B"/>
    <property type="match status" value="1"/>
</dbReference>
<dbReference type="Pfam" id="PF00032">
    <property type="entry name" value="Cytochrom_B_C"/>
    <property type="match status" value="1"/>
</dbReference>
<dbReference type="Pfam" id="PF00033">
    <property type="entry name" value="Cytochrome_B"/>
    <property type="match status" value="1"/>
</dbReference>
<dbReference type="PIRSF" id="PIRSF038885">
    <property type="entry name" value="COB"/>
    <property type="match status" value="1"/>
</dbReference>
<dbReference type="SUPFAM" id="SSF81648">
    <property type="entry name" value="a domain/subunit of cytochrome bc1 complex (Ubiquinol-cytochrome c reductase)"/>
    <property type="match status" value="1"/>
</dbReference>
<dbReference type="SUPFAM" id="SSF81342">
    <property type="entry name" value="Transmembrane di-heme cytochromes"/>
    <property type="match status" value="1"/>
</dbReference>
<dbReference type="PROSITE" id="PS51003">
    <property type="entry name" value="CYTB_CTER"/>
    <property type="match status" value="1"/>
</dbReference>
<dbReference type="PROSITE" id="PS51002">
    <property type="entry name" value="CYTB_NTER"/>
    <property type="match status" value="1"/>
</dbReference>
<protein>
    <recommendedName>
        <fullName>Cytochrome b</fullName>
    </recommendedName>
    <alternativeName>
        <fullName>Complex III subunit 3</fullName>
    </alternativeName>
    <alternativeName>
        <fullName>Complex III subunit III</fullName>
    </alternativeName>
    <alternativeName>
        <fullName>Cytochrome b-c1 complex subunit 3</fullName>
    </alternativeName>
    <alternativeName>
        <fullName>Ubiquinol-cytochrome-c reductase complex cytochrome b subunit</fullName>
    </alternativeName>
</protein>
<gene>
    <name type="primary">MT-CYB</name>
    <name type="synonym">COB</name>
    <name type="synonym">CYTB</name>
    <name type="synonym">MTCYB</name>
</gene>